<protein>
    <recommendedName>
        <fullName>S-formylglutathione hydrolase</fullName>
        <shortName>FGH</shortName>
        <ecNumber>3.1.2.12</ecNumber>
    </recommendedName>
</protein>
<evidence type="ECO:0000250" key="1"/>
<evidence type="ECO:0000305" key="2"/>
<name>SFGH_HAEIN</name>
<feature type="chain" id="PRO_0000210344" description="S-formylglutathione hydrolase">
    <location>
        <begin position="1"/>
        <end position="275"/>
    </location>
</feature>
<feature type="active site" description="Charge relay system" evidence="1">
    <location>
        <position position="145"/>
    </location>
</feature>
<feature type="active site" description="Charge relay system" evidence="1">
    <location>
        <position position="221"/>
    </location>
</feature>
<feature type="active site" description="Charge relay system" evidence="1">
    <location>
        <position position="254"/>
    </location>
</feature>
<reference key="1">
    <citation type="journal article" date="1995" name="Science">
        <title>Whole-genome random sequencing and assembly of Haemophilus influenzae Rd.</title>
        <authorList>
            <person name="Fleischmann R.D."/>
            <person name="Adams M.D."/>
            <person name="White O."/>
            <person name="Clayton R.A."/>
            <person name="Kirkness E.F."/>
            <person name="Kerlavage A.R."/>
            <person name="Bult C.J."/>
            <person name="Tomb J.-F."/>
            <person name="Dougherty B.A."/>
            <person name="Merrick J.M."/>
            <person name="McKenney K."/>
            <person name="Sutton G.G."/>
            <person name="FitzHugh W."/>
            <person name="Fields C.A."/>
            <person name="Gocayne J.D."/>
            <person name="Scott J.D."/>
            <person name="Shirley R."/>
            <person name="Liu L.-I."/>
            <person name="Glodek A."/>
            <person name="Kelley J.M."/>
            <person name="Weidman J.F."/>
            <person name="Phillips C.A."/>
            <person name="Spriggs T."/>
            <person name="Hedblom E."/>
            <person name="Cotton M.D."/>
            <person name="Utterback T.R."/>
            <person name="Hanna M.C."/>
            <person name="Nguyen D.T."/>
            <person name="Saudek D.M."/>
            <person name="Brandon R.C."/>
            <person name="Fine L.D."/>
            <person name="Fritchman J.L."/>
            <person name="Fuhrmann J.L."/>
            <person name="Geoghagen N.S.M."/>
            <person name="Gnehm C.L."/>
            <person name="McDonald L.A."/>
            <person name="Small K.V."/>
            <person name="Fraser C.M."/>
            <person name="Smith H.O."/>
            <person name="Venter J.C."/>
        </authorList>
    </citation>
    <scope>NUCLEOTIDE SEQUENCE [LARGE SCALE GENOMIC DNA]</scope>
    <source>
        <strain>ATCC 51907 / DSM 11121 / KW20 / Rd</strain>
    </source>
</reference>
<reference key="2">
    <citation type="journal article" date="2000" name="Electrophoresis">
        <title>Two-dimensional map of the proteome of Haemophilus influenzae.</title>
        <authorList>
            <person name="Langen H."/>
            <person name="Takacs B."/>
            <person name="Evers S."/>
            <person name="Berndt P."/>
            <person name="Lahm H.W."/>
            <person name="Wipf B."/>
            <person name="Gray C."/>
            <person name="Fountoulakis M."/>
        </authorList>
    </citation>
    <scope>IDENTIFICATION BY MASS SPECTROMETRY</scope>
    <source>
        <strain>ATCC 51907 / DSM 11121 / KW20 / Rd</strain>
    </source>
</reference>
<keyword id="KW-0378">Hydrolase</keyword>
<keyword id="KW-1185">Reference proteome</keyword>
<keyword id="KW-0719">Serine esterase</keyword>
<sequence>MKLIEQHQIFGGSQQVWAHNAQTLQCEMKFAVYLPNNPENRPLGVIYWLSGLTCTEQNFITKSGFQRYAAEHQVIVVAPDTSPRGEQVPNDAAYDLGQGAGFYLNATEQPWATNYQMYDYILNELPDLIEANFPTNGKRSIMGHSMGGHGALVLALRNRERYQSVSAFSPILSPSLVPWGEKAFSAYLGEDREKWQQYDASSLIQQGYKVQGMRIDQGLEDEFLPTQLRTEDFIETCRVANQPVDVRFHKGYDHSYYFIASFIGEHIAYHAEFLK</sequence>
<dbReference type="EC" id="3.1.2.12"/>
<dbReference type="EMBL" id="L42023">
    <property type="protein sequence ID" value="AAC21853.1"/>
    <property type="molecule type" value="Genomic_DNA"/>
</dbReference>
<dbReference type="PIR" id="A64145">
    <property type="entry name" value="A64145"/>
</dbReference>
<dbReference type="RefSeq" id="NP_438352.1">
    <property type="nucleotide sequence ID" value="NC_000907.1"/>
</dbReference>
<dbReference type="SMR" id="P44556"/>
<dbReference type="STRING" id="71421.HI_0184"/>
<dbReference type="ESTHER" id="haein-sfgh">
    <property type="family name" value="A85-EsteraseD-FGH"/>
</dbReference>
<dbReference type="EnsemblBacteria" id="AAC21853">
    <property type="protein sequence ID" value="AAC21853"/>
    <property type="gene ID" value="HI_0184"/>
</dbReference>
<dbReference type="KEGG" id="hin:HI_0184"/>
<dbReference type="PATRIC" id="fig|71421.8.peg.188"/>
<dbReference type="eggNOG" id="COG0627">
    <property type="taxonomic scope" value="Bacteria"/>
</dbReference>
<dbReference type="HOGENOM" id="CLU_056472_0_0_6"/>
<dbReference type="OrthoDB" id="9782200at2"/>
<dbReference type="PhylomeDB" id="P44556"/>
<dbReference type="BioCyc" id="HINF71421:G1GJ1-194-MONOMER"/>
<dbReference type="Proteomes" id="UP000000579">
    <property type="component" value="Chromosome"/>
</dbReference>
<dbReference type="GO" id="GO:0005829">
    <property type="term" value="C:cytosol"/>
    <property type="evidence" value="ECO:0000318"/>
    <property type="project" value="GO_Central"/>
</dbReference>
<dbReference type="GO" id="GO:0052689">
    <property type="term" value="F:carboxylic ester hydrolase activity"/>
    <property type="evidence" value="ECO:0007669"/>
    <property type="project" value="UniProtKB-KW"/>
</dbReference>
<dbReference type="GO" id="GO:0018738">
    <property type="term" value="F:S-formylglutathione hydrolase activity"/>
    <property type="evidence" value="ECO:0000318"/>
    <property type="project" value="GO_Central"/>
</dbReference>
<dbReference type="GO" id="GO:0046294">
    <property type="term" value="P:formaldehyde catabolic process"/>
    <property type="evidence" value="ECO:0007669"/>
    <property type="project" value="InterPro"/>
</dbReference>
<dbReference type="FunFam" id="3.40.50.1820:FF:000002">
    <property type="entry name" value="S-formylglutathione hydrolase"/>
    <property type="match status" value="1"/>
</dbReference>
<dbReference type="Gene3D" id="3.40.50.1820">
    <property type="entry name" value="alpha/beta hydrolase"/>
    <property type="match status" value="1"/>
</dbReference>
<dbReference type="InterPro" id="IPR029058">
    <property type="entry name" value="AB_hydrolase_fold"/>
</dbReference>
<dbReference type="InterPro" id="IPR000801">
    <property type="entry name" value="Esterase-like"/>
</dbReference>
<dbReference type="InterPro" id="IPR014186">
    <property type="entry name" value="S-formylglutathione_hydrol"/>
</dbReference>
<dbReference type="NCBIfam" id="TIGR02821">
    <property type="entry name" value="fghA_ester_D"/>
    <property type="match status" value="1"/>
</dbReference>
<dbReference type="PANTHER" id="PTHR10061">
    <property type="entry name" value="S-FORMYLGLUTATHIONE HYDROLASE"/>
    <property type="match status" value="1"/>
</dbReference>
<dbReference type="PANTHER" id="PTHR10061:SF0">
    <property type="entry name" value="S-FORMYLGLUTATHIONE HYDROLASE"/>
    <property type="match status" value="1"/>
</dbReference>
<dbReference type="Pfam" id="PF00756">
    <property type="entry name" value="Esterase"/>
    <property type="match status" value="1"/>
</dbReference>
<dbReference type="SUPFAM" id="SSF53474">
    <property type="entry name" value="alpha/beta-Hydrolases"/>
    <property type="match status" value="1"/>
</dbReference>
<comment type="function">
    <text evidence="1">Serine hydrolase involved in the detoxification of formaldehyde. Hydrolyzes S-formylglutathione to glutathione and formate (By similarity).</text>
</comment>
<comment type="catalytic activity">
    <reaction>
        <text>S-formylglutathione + H2O = formate + glutathione + H(+)</text>
        <dbReference type="Rhea" id="RHEA:14961"/>
        <dbReference type="ChEBI" id="CHEBI:15377"/>
        <dbReference type="ChEBI" id="CHEBI:15378"/>
        <dbReference type="ChEBI" id="CHEBI:15740"/>
        <dbReference type="ChEBI" id="CHEBI:57688"/>
        <dbReference type="ChEBI" id="CHEBI:57925"/>
        <dbReference type="EC" id="3.1.2.12"/>
    </reaction>
</comment>
<comment type="similarity">
    <text evidence="2">Belongs to the esterase D family.</text>
</comment>
<accession>P44556</accession>
<proteinExistence type="evidence at protein level"/>
<gene>
    <name type="ordered locus">HI_0184</name>
</gene>
<organism>
    <name type="scientific">Haemophilus influenzae (strain ATCC 51907 / DSM 11121 / KW20 / Rd)</name>
    <dbReference type="NCBI Taxonomy" id="71421"/>
    <lineage>
        <taxon>Bacteria</taxon>
        <taxon>Pseudomonadati</taxon>
        <taxon>Pseudomonadota</taxon>
        <taxon>Gammaproteobacteria</taxon>
        <taxon>Pasteurellales</taxon>
        <taxon>Pasteurellaceae</taxon>
        <taxon>Haemophilus</taxon>
    </lineage>
</organism>